<proteinExistence type="evidence at protein level"/>
<feature type="chain" id="PRO_0000084245" description="Interferon-stimulated gene 20 kDa protein">
    <location>
        <begin position="1"/>
        <end position="181"/>
    </location>
</feature>
<feature type="binding site" evidence="1">
    <location>
        <position position="11"/>
    </location>
    <ligand>
        <name>Mn(2+)</name>
        <dbReference type="ChEBI" id="CHEBI:29035"/>
        <label>1</label>
    </ligand>
</feature>
<feature type="binding site" evidence="1">
    <location>
        <position position="13"/>
    </location>
    <ligand>
        <name>Mn(2+)</name>
        <dbReference type="ChEBI" id="CHEBI:29035"/>
        <label>1</label>
    </ligand>
</feature>
<feature type="binding site" evidence="1">
    <location>
        <position position="90"/>
    </location>
    <ligand>
        <name>Mn(2+)</name>
        <dbReference type="ChEBI" id="CHEBI:29035"/>
        <label>2</label>
    </ligand>
</feature>
<feature type="binding site" evidence="1">
    <location>
        <position position="93"/>
    </location>
    <ligand>
        <name>Mn(2+)</name>
        <dbReference type="ChEBI" id="CHEBI:29035"/>
        <label>2</label>
    </ligand>
</feature>
<feature type="binding site" evidence="1">
    <location>
        <position position="154"/>
    </location>
    <ligand>
        <name>Mn(2+)</name>
        <dbReference type="ChEBI" id="CHEBI:29035"/>
        <label>1</label>
    </ligand>
</feature>
<sequence>MAGSREVVAMDCEMVGMGPRRESGLARCSLVNVHGAVLYDKFIQPEGEITDYRTRVSGVTPQHMVGATPFAVARLEILQLLKGKLVVGHDLKHDFQALKEDMNRYTIYDTSTDMLLWREAKLDHCRRVSLRVLCERLLHKSIQNSLLGHSSVEDAKATMELYQISQRIRARRGLPRLAVSD</sequence>
<gene>
    <name type="primary">Isg20</name>
</gene>
<organism>
    <name type="scientific">Sus scrofa</name>
    <name type="common">Pig</name>
    <dbReference type="NCBI Taxonomy" id="9823"/>
    <lineage>
        <taxon>Eukaryota</taxon>
        <taxon>Metazoa</taxon>
        <taxon>Chordata</taxon>
        <taxon>Craniata</taxon>
        <taxon>Vertebrata</taxon>
        <taxon>Euteleostomi</taxon>
        <taxon>Mammalia</taxon>
        <taxon>Eutheria</taxon>
        <taxon>Laurasiatheria</taxon>
        <taxon>Artiodactyla</taxon>
        <taxon>Suina</taxon>
        <taxon>Suidae</taxon>
        <taxon>Sus</taxon>
    </lineage>
</organism>
<reference key="1">
    <citation type="submission" date="2005-03" db="EMBL/GenBank/DDBJ databases">
        <title>Porcine interferon-stimulated gene - 20 kDa.</title>
        <authorList>
            <person name="Rowland R.R."/>
            <person name="Aguirre L.M.N."/>
            <person name="Schneider P."/>
        </authorList>
    </citation>
    <scope>NUCLEOTIDE SEQUENCE [MRNA]</scope>
</reference>
<comment type="function">
    <text evidence="2 3">Interferon-induced antiviral exoribonuclease that acts mainly on single-stranded RNA. Inhibition of several viruses does not involve the degradation of viral RNAs, but rather the inhibition of translation of viral proteins. Exerts a translational control over a large panel of non-self RNA substrates while sparing endogenous transcripts. This activity correlates with the protein's ability to localize in cytoplasmic processing bodies. May also act as master regulator of over hundred interferon stimulated genes leading to viral genome translation inhibition (By similarity). May play additional roles in the maturation of snRNAs and rRNAs, and in ribosome biogenesis (By similarity).</text>
</comment>
<comment type="catalytic activity">
    <reaction>
        <text>Exonucleolytic cleavage in the 3'- to 5'-direction to yield nucleoside 5'-phosphates.</text>
        <dbReference type="EC" id="3.1.13.1"/>
    </reaction>
</comment>
<comment type="cofactor">
    <cofactor>
        <name>Mn(2+)</name>
        <dbReference type="ChEBI" id="CHEBI:29035"/>
    </cofactor>
    <text>Binds 2 manganese ions per subunit.</text>
</comment>
<comment type="biophysicochemical properties">
    <phDependence>
        <text>Optimum pH is 7.0.</text>
    </phDependence>
</comment>
<comment type="subunit">
    <text evidence="1">Associates with PML and SP100 in the PML NB complex. Associates with survival motor neuron protein (SMN)-containing macromolecular nuclear complexes and U1 and U2 snRNAs and U3 snoRNA (By similarity).</text>
</comment>
<comment type="subcellular location">
    <subcellularLocation>
        <location evidence="1">Nucleus</location>
    </subcellularLocation>
    <subcellularLocation>
        <location evidence="1">Nucleus</location>
        <location evidence="1">Nucleolus</location>
    </subcellularLocation>
    <subcellularLocation>
        <location evidence="1">Cytoplasm</location>
    </subcellularLocation>
    <subcellularLocation>
        <location evidence="1">Nucleus</location>
        <location evidence="1">Cajal body</location>
    </subcellularLocation>
</comment>
<comment type="induction">
    <text evidence="1">Induced by interferons alpha and beta. Weaker induction was seen with interferon gamma. Increased expression was seen at the transcriptional level (By similarity).</text>
</comment>
<comment type="similarity">
    <text evidence="4">Belongs to the exonuclease superfamily.</text>
</comment>
<protein>
    <recommendedName>
        <fullName>Interferon-stimulated gene 20 kDa protein</fullName>
        <ecNumber>3.1.13.1</ecNumber>
    </recommendedName>
</protein>
<dbReference type="EC" id="3.1.13.1"/>
<dbReference type="EMBL" id="AY702647">
    <property type="protein sequence ID" value="AAU09455.2"/>
    <property type="molecule type" value="mRNA"/>
</dbReference>
<dbReference type="RefSeq" id="NP_001005351.2">
    <property type="nucleotide sequence ID" value="NM_001005351.2"/>
</dbReference>
<dbReference type="SMR" id="Q66UW5"/>
<dbReference type="FunCoup" id="Q66UW5">
    <property type="interactions" value="66"/>
</dbReference>
<dbReference type="GeneID" id="448855"/>
<dbReference type="CTD" id="3669"/>
<dbReference type="InParanoid" id="Q66UW5"/>
<dbReference type="OrthoDB" id="16516at2759"/>
<dbReference type="Proteomes" id="UP000008227">
    <property type="component" value="Unplaced"/>
</dbReference>
<dbReference type="Proteomes" id="UP000314985">
    <property type="component" value="Unplaced"/>
</dbReference>
<dbReference type="Proteomes" id="UP000694570">
    <property type="component" value="Unplaced"/>
</dbReference>
<dbReference type="Proteomes" id="UP000694571">
    <property type="component" value="Unplaced"/>
</dbReference>
<dbReference type="Proteomes" id="UP000694720">
    <property type="component" value="Unplaced"/>
</dbReference>
<dbReference type="Proteomes" id="UP000694722">
    <property type="component" value="Unplaced"/>
</dbReference>
<dbReference type="Proteomes" id="UP000694723">
    <property type="component" value="Unplaced"/>
</dbReference>
<dbReference type="Proteomes" id="UP000694724">
    <property type="component" value="Unplaced"/>
</dbReference>
<dbReference type="Proteomes" id="UP000694725">
    <property type="component" value="Unplaced"/>
</dbReference>
<dbReference type="Proteomes" id="UP000694726">
    <property type="component" value="Unplaced"/>
</dbReference>
<dbReference type="Proteomes" id="UP000694727">
    <property type="component" value="Unplaced"/>
</dbReference>
<dbReference type="Proteomes" id="UP000694728">
    <property type="component" value="Unplaced"/>
</dbReference>
<dbReference type="GO" id="GO:0015030">
    <property type="term" value="C:Cajal body"/>
    <property type="evidence" value="ECO:0000250"/>
    <property type="project" value="UniProtKB"/>
</dbReference>
<dbReference type="GO" id="GO:0005737">
    <property type="term" value="C:cytoplasm"/>
    <property type="evidence" value="ECO:0000250"/>
    <property type="project" value="UniProtKB"/>
</dbReference>
<dbReference type="GO" id="GO:0005730">
    <property type="term" value="C:nucleolus"/>
    <property type="evidence" value="ECO:0000250"/>
    <property type="project" value="UniProtKB"/>
</dbReference>
<dbReference type="GO" id="GO:0005634">
    <property type="term" value="C:nucleus"/>
    <property type="evidence" value="ECO:0000250"/>
    <property type="project" value="UniProtKB"/>
</dbReference>
<dbReference type="GO" id="GO:0004527">
    <property type="term" value="F:exonuclease activity"/>
    <property type="evidence" value="ECO:0000250"/>
    <property type="project" value="UniProtKB"/>
</dbReference>
<dbReference type="GO" id="GO:0008859">
    <property type="term" value="F:exoribonuclease II activity"/>
    <property type="evidence" value="ECO:0007669"/>
    <property type="project" value="UniProtKB-EC"/>
</dbReference>
<dbReference type="GO" id="GO:0046872">
    <property type="term" value="F:metal ion binding"/>
    <property type="evidence" value="ECO:0007669"/>
    <property type="project" value="UniProtKB-KW"/>
</dbReference>
<dbReference type="GO" id="GO:0030619">
    <property type="term" value="F:U1 snRNA binding"/>
    <property type="evidence" value="ECO:0000250"/>
    <property type="project" value="UniProtKB"/>
</dbReference>
<dbReference type="GO" id="GO:0030620">
    <property type="term" value="F:U2 snRNA binding"/>
    <property type="evidence" value="ECO:0000250"/>
    <property type="project" value="UniProtKB"/>
</dbReference>
<dbReference type="GO" id="GO:0034511">
    <property type="term" value="F:U3 snoRNA binding"/>
    <property type="evidence" value="ECO:0000250"/>
    <property type="project" value="UniProtKB"/>
</dbReference>
<dbReference type="GO" id="GO:0051607">
    <property type="term" value="P:defense response to virus"/>
    <property type="evidence" value="ECO:0000250"/>
    <property type="project" value="UniProtKB"/>
</dbReference>
<dbReference type="GO" id="GO:0006308">
    <property type="term" value="P:DNA catabolic process"/>
    <property type="evidence" value="ECO:0000318"/>
    <property type="project" value="GO_Central"/>
</dbReference>
<dbReference type="GO" id="GO:0045087">
    <property type="term" value="P:innate immune response"/>
    <property type="evidence" value="ECO:0007669"/>
    <property type="project" value="UniProtKB-KW"/>
</dbReference>
<dbReference type="GO" id="GO:0045071">
    <property type="term" value="P:negative regulation of viral genome replication"/>
    <property type="evidence" value="ECO:0000318"/>
    <property type="project" value="GO_Central"/>
</dbReference>
<dbReference type="GO" id="GO:0006401">
    <property type="term" value="P:RNA catabolic process"/>
    <property type="evidence" value="ECO:0000318"/>
    <property type="project" value="GO_Central"/>
</dbReference>
<dbReference type="GO" id="GO:0006396">
    <property type="term" value="P:RNA processing"/>
    <property type="evidence" value="ECO:0000318"/>
    <property type="project" value="GO_Central"/>
</dbReference>
<dbReference type="GO" id="GO:0006364">
    <property type="term" value="P:rRNA processing"/>
    <property type="evidence" value="ECO:0007669"/>
    <property type="project" value="UniProtKB-KW"/>
</dbReference>
<dbReference type="FunFam" id="3.30.420.10:FF:000007">
    <property type="entry name" value="Interferon-stimulated exonuclease gene 20"/>
    <property type="match status" value="1"/>
</dbReference>
<dbReference type="Gene3D" id="3.30.420.10">
    <property type="entry name" value="Ribonuclease H-like superfamily/Ribonuclease H"/>
    <property type="match status" value="1"/>
</dbReference>
<dbReference type="InterPro" id="IPR013520">
    <property type="entry name" value="Exonuclease_RNaseT/DNA_pol3"/>
</dbReference>
<dbReference type="InterPro" id="IPR047021">
    <property type="entry name" value="REXO1/3/4-like"/>
</dbReference>
<dbReference type="InterPro" id="IPR012337">
    <property type="entry name" value="RNaseH-like_sf"/>
</dbReference>
<dbReference type="InterPro" id="IPR036397">
    <property type="entry name" value="RNaseH_sf"/>
</dbReference>
<dbReference type="PANTHER" id="PTHR12801:SF59">
    <property type="entry name" value="INTERFERON-STIMULATED GENE 20 KDA PROTEIN"/>
    <property type="match status" value="1"/>
</dbReference>
<dbReference type="PANTHER" id="PTHR12801">
    <property type="entry name" value="RNA EXONUCLEASE REXO1 / RECO3 FAMILY MEMBER-RELATED"/>
    <property type="match status" value="1"/>
</dbReference>
<dbReference type="Pfam" id="PF00929">
    <property type="entry name" value="RNase_T"/>
    <property type="match status" value="1"/>
</dbReference>
<dbReference type="SMART" id="SM00479">
    <property type="entry name" value="EXOIII"/>
    <property type="match status" value="1"/>
</dbReference>
<dbReference type="SUPFAM" id="SSF53098">
    <property type="entry name" value="Ribonuclease H-like"/>
    <property type="match status" value="1"/>
</dbReference>
<accession>Q66UW5</accession>
<name>ISG20_PIG</name>
<keyword id="KW-0051">Antiviral defense</keyword>
<keyword id="KW-0963">Cytoplasm</keyword>
<keyword id="KW-0269">Exonuclease</keyword>
<keyword id="KW-0378">Hydrolase</keyword>
<keyword id="KW-0391">Immunity</keyword>
<keyword id="KW-0399">Innate immunity</keyword>
<keyword id="KW-0464">Manganese</keyword>
<keyword id="KW-0479">Metal-binding</keyword>
<keyword id="KW-0540">Nuclease</keyword>
<keyword id="KW-0539">Nucleus</keyword>
<keyword id="KW-1185">Reference proteome</keyword>
<keyword id="KW-0694">RNA-binding</keyword>
<keyword id="KW-0698">rRNA processing</keyword>
<evidence type="ECO:0000250" key="1"/>
<evidence type="ECO:0000250" key="2">
    <source>
        <dbReference type="UniProtKB" id="Q96AZ6"/>
    </source>
</evidence>
<evidence type="ECO:0000250" key="3">
    <source>
        <dbReference type="UniProtKB" id="Q9JL16"/>
    </source>
</evidence>
<evidence type="ECO:0000305" key="4"/>